<organism>
    <name type="scientific">Mycobacterium tuberculosis (strain ATCC 25618 / H37Rv)</name>
    <dbReference type="NCBI Taxonomy" id="83332"/>
    <lineage>
        <taxon>Bacteria</taxon>
        <taxon>Bacillati</taxon>
        <taxon>Actinomycetota</taxon>
        <taxon>Actinomycetes</taxon>
        <taxon>Mycobacteriales</taxon>
        <taxon>Mycobacteriaceae</taxon>
        <taxon>Mycobacterium</taxon>
        <taxon>Mycobacterium tuberculosis complex</taxon>
    </lineage>
</organism>
<sequence length="409" mass="45514">MSNAPKIKVSGPVVELDGDEMTRVIWKLIKDMLILPYLDIRLDYYDLGIEHRDATDDQVTIDAAYAIKKHGVGVKCATITPDEARVEEFNLKKMWLSPNGTIRNILGGTIFREPIVISNVPRLVPGWTKPIVIGRHAFGDQYRATNFKVDQPGTVTLTFTPADGSAPIVHEMVSIPEDGGVVLGMYNFKESIRDFARASFSYGLNAKWPVYLSTKNTILKAYDGMFKDEFERVYEEEFKAQFEAAGLTYEHRLIDDMVAACLKWEGGYVWACKNYDGDVQSDTVAQGYGSLGLMTSVLMTADGKTVEAEAAHGTVTRHYRQYQAGKPTSTNPIASIFAWTRGLQHRGKLDGTPEVIDFAHKLESVVIATVESGKMTKDLAILIGPEQDWLNSEEFLDAIADNLEKELAN</sequence>
<evidence type="ECO:0000250" key="1">
    <source>
        <dbReference type="UniProtKB" id="P08200"/>
    </source>
</evidence>
<evidence type="ECO:0000269" key="2">
    <source>
    </source>
</evidence>
<evidence type="ECO:0000269" key="3">
    <source>
    </source>
</evidence>
<evidence type="ECO:0000269" key="4">
    <source>
    </source>
</evidence>
<evidence type="ECO:0000303" key="5">
    <source>
    </source>
</evidence>
<evidence type="ECO:0000303" key="6">
    <source>
    </source>
</evidence>
<evidence type="ECO:0000305" key="7"/>
<evidence type="ECO:0007744" key="8">
    <source>
        <dbReference type="PDB" id="4HCX"/>
    </source>
</evidence>
<evidence type="ECO:0007829" key="9">
    <source>
        <dbReference type="PDB" id="4HCX"/>
    </source>
</evidence>
<protein>
    <recommendedName>
        <fullName evidence="6">Isocitrate dehydrogenase [NADP] 1</fullName>
        <shortName evidence="5">ICD-1</shortName>
        <shortName evidence="6">ICDH-1</shortName>
        <shortName>IDH 1</shortName>
        <ecNumber evidence="2 3 4">1.1.1.42</ecNumber>
    </recommendedName>
    <alternativeName>
        <fullName>IDP</fullName>
    </alternativeName>
    <alternativeName>
        <fullName>NADP(+)-specific ICDH</fullName>
    </alternativeName>
    <alternativeName>
        <fullName>Oxalosuccinate decarboxylase</fullName>
    </alternativeName>
</protein>
<dbReference type="EC" id="1.1.1.42" evidence="2 3 4"/>
<dbReference type="EMBL" id="AL123456">
    <property type="protein sequence ID" value="CCP46160.1"/>
    <property type="molecule type" value="Genomic_DNA"/>
</dbReference>
<dbReference type="PIR" id="B70846">
    <property type="entry name" value="B70846"/>
</dbReference>
<dbReference type="RefSeq" id="WP_003417452.1">
    <property type="nucleotide sequence ID" value="NZ_NVQJ01000051.1"/>
</dbReference>
<dbReference type="PDB" id="4HCX">
    <property type="method" value="X-ray"/>
    <property type="resolution" value="2.18 A"/>
    <property type="chains" value="A/B=1-409"/>
</dbReference>
<dbReference type="PDBsum" id="4HCX"/>
<dbReference type="SMR" id="P9WKL1"/>
<dbReference type="FunCoup" id="P9WKL1">
    <property type="interactions" value="484"/>
</dbReference>
<dbReference type="STRING" id="83332.Rv3339c"/>
<dbReference type="PaxDb" id="83332-Rv3339c"/>
<dbReference type="DNASU" id="888013"/>
<dbReference type="KEGG" id="mtu:Rv3339c"/>
<dbReference type="KEGG" id="mtv:RVBD_3339c"/>
<dbReference type="PATRIC" id="fig|83332.111.peg.3724"/>
<dbReference type="TubercuList" id="Rv3339c"/>
<dbReference type="eggNOG" id="COG0538">
    <property type="taxonomic scope" value="Bacteria"/>
</dbReference>
<dbReference type="InParanoid" id="P9WKL1"/>
<dbReference type="OrthoDB" id="9765655at2"/>
<dbReference type="PhylomeDB" id="P9WKL1"/>
<dbReference type="BioCyc" id="MetaCyc:G185E-7615-MONOMER"/>
<dbReference type="BRENDA" id="1.1.1.42">
    <property type="organism ID" value="3445"/>
</dbReference>
<dbReference type="SABIO-RK" id="P9WKL1"/>
<dbReference type="EvolutionaryTrace" id="P9WKL1"/>
<dbReference type="Proteomes" id="UP000001584">
    <property type="component" value="Chromosome"/>
</dbReference>
<dbReference type="GO" id="GO:0005886">
    <property type="term" value="C:plasma membrane"/>
    <property type="evidence" value="ECO:0007005"/>
    <property type="project" value="MTBBASE"/>
</dbReference>
<dbReference type="GO" id="GO:0004450">
    <property type="term" value="F:isocitrate dehydrogenase (NADP+) activity"/>
    <property type="evidence" value="ECO:0000314"/>
    <property type="project" value="MTBBASE"/>
</dbReference>
<dbReference type="GO" id="GO:0000287">
    <property type="term" value="F:magnesium ion binding"/>
    <property type="evidence" value="ECO:0000314"/>
    <property type="project" value="MTBBASE"/>
</dbReference>
<dbReference type="GO" id="GO:0051287">
    <property type="term" value="F:NAD binding"/>
    <property type="evidence" value="ECO:0007669"/>
    <property type="project" value="InterPro"/>
</dbReference>
<dbReference type="GO" id="GO:0008270">
    <property type="term" value="F:zinc ion binding"/>
    <property type="evidence" value="ECO:0000314"/>
    <property type="project" value="MTBBASE"/>
</dbReference>
<dbReference type="GO" id="GO:0006097">
    <property type="term" value="P:glyoxylate cycle"/>
    <property type="evidence" value="ECO:0000314"/>
    <property type="project" value="MTBBASE"/>
</dbReference>
<dbReference type="GO" id="GO:0006102">
    <property type="term" value="P:isocitrate metabolic process"/>
    <property type="evidence" value="ECO:0000314"/>
    <property type="project" value="MTBBASE"/>
</dbReference>
<dbReference type="GO" id="GO:0006099">
    <property type="term" value="P:tricarboxylic acid cycle"/>
    <property type="evidence" value="ECO:0000314"/>
    <property type="project" value="MTBBASE"/>
</dbReference>
<dbReference type="FunFam" id="3.40.718.10:FF:000018">
    <property type="entry name" value="Isocitrate dehydrogenase [NADP]"/>
    <property type="match status" value="1"/>
</dbReference>
<dbReference type="Gene3D" id="3.40.718.10">
    <property type="entry name" value="Isopropylmalate Dehydrogenase"/>
    <property type="match status" value="1"/>
</dbReference>
<dbReference type="InterPro" id="IPR019818">
    <property type="entry name" value="IsoCit/isopropylmalate_DH_CS"/>
</dbReference>
<dbReference type="InterPro" id="IPR004790">
    <property type="entry name" value="Isocitrate_DH_NADP"/>
</dbReference>
<dbReference type="InterPro" id="IPR024084">
    <property type="entry name" value="IsoPropMal-DH-like_dom"/>
</dbReference>
<dbReference type="NCBIfam" id="TIGR00127">
    <property type="entry name" value="nadp_idh_euk"/>
    <property type="match status" value="1"/>
</dbReference>
<dbReference type="NCBIfam" id="NF006156">
    <property type="entry name" value="PRK08299.1"/>
    <property type="match status" value="1"/>
</dbReference>
<dbReference type="PANTHER" id="PTHR11822:SF21">
    <property type="entry name" value="ISOCITRATE DEHYDROGENASE [NADP], MITOCHONDRIAL"/>
    <property type="match status" value="1"/>
</dbReference>
<dbReference type="PANTHER" id="PTHR11822">
    <property type="entry name" value="NADP-SPECIFIC ISOCITRATE DEHYDROGENASE"/>
    <property type="match status" value="1"/>
</dbReference>
<dbReference type="Pfam" id="PF00180">
    <property type="entry name" value="Iso_dh"/>
    <property type="match status" value="1"/>
</dbReference>
<dbReference type="PIRSF" id="PIRSF000108">
    <property type="entry name" value="IDH_NADP"/>
    <property type="match status" value="1"/>
</dbReference>
<dbReference type="SMART" id="SM01329">
    <property type="entry name" value="Iso_dh"/>
    <property type="match status" value="1"/>
</dbReference>
<dbReference type="SUPFAM" id="SSF53659">
    <property type="entry name" value="Isocitrate/Isopropylmalate dehydrogenase-like"/>
    <property type="match status" value="1"/>
</dbReference>
<dbReference type="PROSITE" id="PS00470">
    <property type="entry name" value="IDH_IMDH"/>
    <property type="match status" value="1"/>
</dbReference>
<proteinExistence type="evidence at protein level"/>
<gene>
    <name evidence="5" type="primary">icd-1</name>
    <name type="synonym">icd</name>
    <name type="ordered locus">Rv3339c</name>
    <name type="ORF">MTV016.39c</name>
</gene>
<feature type="chain" id="PRO_0000083555" description="Isocitrate dehydrogenase [NADP] 1">
    <location>
        <begin position="1"/>
        <end position="409"/>
    </location>
</feature>
<feature type="binding site" evidence="3 8">
    <location>
        <position position="75"/>
    </location>
    <ligand>
        <name>NADP(+)</name>
        <dbReference type="ChEBI" id="CHEBI:58349"/>
    </ligand>
</feature>
<feature type="binding site" evidence="3 8">
    <location>
        <position position="78"/>
    </location>
    <ligand>
        <name>NADP(+)</name>
        <dbReference type="ChEBI" id="CHEBI:58349"/>
    </ligand>
</feature>
<feature type="binding site" evidence="3 8">
    <location>
        <position position="80"/>
    </location>
    <ligand>
        <name>NADP(+)</name>
        <dbReference type="ChEBI" id="CHEBI:58349"/>
    </ligand>
</feature>
<feature type="binding site" evidence="3 8">
    <location>
        <position position="85"/>
    </location>
    <ligand>
        <name>NADP(+)</name>
        <dbReference type="ChEBI" id="CHEBI:58349"/>
    </ligand>
</feature>
<feature type="binding site" evidence="3 8">
    <location>
        <position position="255"/>
    </location>
    <ligand>
        <name>Mn(2+)</name>
        <dbReference type="ChEBI" id="CHEBI:29035"/>
    </ligand>
</feature>
<feature type="binding site" evidence="3 8">
    <location>
        <position position="278"/>
    </location>
    <ligand>
        <name>Mn(2+)</name>
        <dbReference type="ChEBI" id="CHEBI:29035"/>
    </ligand>
</feature>
<feature type="binding site" evidence="3 8">
    <location>
        <position position="282"/>
    </location>
    <ligand>
        <name>Mn(2+)</name>
        <dbReference type="ChEBI" id="CHEBI:29035"/>
    </ligand>
</feature>
<feature type="binding site" evidence="3 8">
    <location>
        <position position="313"/>
    </location>
    <ligand>
        <name>NADP(+)</name>
        <dbReference type="ChEBI" id="CHEBI:58349"/>
    </ligand>
</feature>
<feature type="binding site" evidence="3 8">
    <location>
        <position position="314"/>
    </location>
    <ligand>
        <name>NADP(+)</name>
        <dbReference type="ChEBI" id="CHEBI:58349"/>
    </ligand>
</feature>
<feature type="binding site" evidence="3 8">
    <location>
        <position position="315"/>
    </location>
    <ligand>
        <name>NADP(+)</name>
        <dbReference type="ChEBI" id="CHEBI:58349"/>
    </ligand>
</feature>
<feature type="binding site" evidence="3 8">
    <location>
        <position position="318"/>
    </location>
    <ligand>
        <name>NADP(+)</name>
        <dbReference type="ChEBI" id="CHEBI:58349"/>
    </ligand>
</feature>
<feature type="binding site" evidence="3 8">
    <location>
        <position position="331"/>
    </location>
    <ligand>
        <name>NADP(+)</name>
        <dbReference type="ChEBI" id="CHEBI:58349"/>
    </ligand>
</feature>
<feature type="site" description="Critical for catalysis" evidence="1">
    <location>
        <position position="142"/>
    </location>
</feature>
<feature type="site" description="Critical for catalysis" evidence="1">
    <location>
        <position position="215"/>
    </location>
</feature>
<feature type="modified residue" description="N6-acetyllysine" evidence="4">
    <location>
        <position position="30"/>
    </location>
</feature>
<feature type="modified residue" description="N6-acetyllysine" evidence="4">
    <location>
        <position position="129"/>
    </location>
</feature>
<feature type="strand" evidence="9">
    <location>
        <begin position="13"/>
        <end position="17"/>
    </location>
</feature>
<feature type="helix" evidence="9">
    <location>
        <begin position="20"/>
        <end position="33"/>
    </location>
</feature>
<feature type="turn" evidence="9">
    <location>
        <begin position="34"/>
        <end position="37"/>
    </location>
</feature>
<feature type="strand" evidence="9">
    <location>
        <begin position="42"/>
        <end position="46"/>
    </location>
</feature>
<feature type="helix" evidence="9">
    <location>
        <begin position="49"/>
        <end position="54"/>
    </location>
</feature>
<feature type="turn" evidence="9">
    <location>
        <begin position="55"/>
        <end position="57"/>
    </location>
</feature>
<feature type="helix" evidence="9">
    <location>
        <begin position="58"/>
        <end position="70"/>
    </location>
</feature>
<feature type="strand" evidence="9">
    <location>
        <begin position="71"/>
        <end position="75"/>
    </location>
</feature>
<feature type="helix" evidence="9">
    <location>
        <begin position="83"/>
        <end position="89"/>
    </location>
</feature>
<feature type="helix" evidence="9">
    <location>
        <begin position="98"/>
        <end position="106"/>
    </location>
</feature>
<feature type="strand" evidence="9">
    <location>
        <begin position="109"/>
        <end position="114"/>
    </location>
</feature>
<feature type="strand" evidence="9">
    <location>
        <begin position="131"/>
        <end position="135"/>
    </location>
</feature>
<feature type="helix" evidence="9">
    <location>
        <begin position="140"/>
        <end position="143"/>
    </location>
</feature>
<feature type="strand" evidence="9">
    <location>
        <begin position="145"/>
        <end position="151"/>
    </location>
</feature>
<feature type="strand" evidence="9">
    <location>
        <begin position="153"/>
        <end position="161"/>
    </location>
</feature>
<feature type="strand" evidence="9">
    <location>
        <begin position="168"/>
        <end position="175"/>
    </location>
</feature>
<feature type="strand" evidence="9">
    <location>
        <begin position="180"/>
        <end position="188"/>
    </location>
</feature>
<feature type="helix" evidence="9">
    <location>
        <begin position="189"/>
        <end position="206"/>
    </location>
</feature>
<feature type="strand" evidence="9">
    <location>
        <begin position="210"/>
        <end position="214"/>
    </location>
</feature>
<feature type="turn" evidence="9">
    <location>
        <begin position="216"/>
        <end position="218"/>
    </location>
</feature>
<feature type="helix" evidence="9">
    <location>
        <begin position="220"/>
        <end position="237"/>
    </location>
</feature>
<feature type="helix" evidence="9">
    <location>
        <begin position="239"/>
        <end position="243"/>
    </location>
</feature>
<feature type="turn" evidence="9">
    <location>
        <begin position="244"/>
        <end position="246"/>
    </location>
</feature>
<feature type="strand" evidence="9">
    <location>
        <begin position="249"/>
        <end position="253"/>
    </location>
</feature>
<feature type="helix" evidence="9">
    <location>
        <begin position="254"/>
        <end position="263"/>
    </location>
</feature>
<feature type="strand" evidence="9">
    <location>
        <begin position="268"/>
        <end position="272"/>
    </location>
</feature>
<feature type="helix" evidence="9">
    <location>
        <begin position="274"/>
        <end position="287"/>
    </location>
</feature>
<feature type="helix" evidence="9">
    <location>
        <begin position="291"/>
        <end position="293"/>
    </location>
</feature>
<feature type="strand" evidence="9">
    <location>
        <begin position="294"/>
        <end position="299"/>
    </location>
</feature>
<feature type="strand" evidence="9">
    <location>
        <begin position="306"/>
        <end position="312"/>
    </location>
</feature>
<feature type="helix" evidence="9">
    <location>
        <begin position="316"/>
        <end position="324"/>
    </location>
</feature>
<feature type="helix" evidence="9">
    <location>
        <begin position="333"/>
        <end position="350"/>
    </location>
</feature>
<feature type="helix" evidence="9">
    <location>
        <begin position="353"/>
        <end position="370"/>
    </location>
</feature>
<feature type="turn" evidence="9">
    <location>
        <begin position="371"/>
        <end position="373"/>
    </location>
</feature>
<feature type="helix" evidence="9">
    <location>
        <begin position="377"/>
        <end position="383"/>
    </location>
</feature>
<feature type="helix" evidence="9">
    <location>
        <begin position="392"/>
        <end position="404"/>
    </location>
</feature>
<accession>P9WKL1</accession>
<accession>L0TFB7</accession>
<accession>O53389</accession>
<accession>P65097</accession>
<comment type="function">
    <text evidence="2 3 4">Catalyzes the oxidative decarboxylation of isocitrate to 2-oxoglutarate and carbon dioxide with the concomitant reduction of NADP(+) (PubMed:16194279, PubMed:23409873, PubMed:28250431). Cannot use NAD(+) (PubMed:16194279).</text>
</comment>
<comment type="catalytic activity">
    <reaction evidence="2 3 4">
        <text>D-threo-isocitrate + NADP(+) = 2-oxoglutarate + CO2 + NADPH</text>
        <dbReference type="Rhea" id="RHEA:19629"/>
        <dbReference type="ChEBI" id="CHEBI:15562"/>
        <dbReference type="ChEBI" id="CHEBI:16526"/>
        <dbReference type="ChEBI" id="CHEBI:16810"/>
        <dbReference type="ChEBI" id="CHEBI:57783"/>
        <dbReference type="ChEBI" id="CHEBI:58349"/>
        <dbReference type="EC" id="1.1.1.42"/>
    </reaction>
</comment>
<comment type="cofactor">
    <cofactor evidence="2 3">
        <name>Mg(2+)</name>
        <dbReference type="ChEBI" id="CHEBI:18420"/>
    </cofactor>
    <cofactor evidence="3">
        <name>Mn(2+)</name>
        <dbReference type="ChEBI" id="CHEBI:29035"/>
    </cofactor>
    <cofactor evidence="2">
        <name>Zn(2+)</name>
        <dbReference type="ChEBI" id="CHEBI:29105"/>
    </cofactor>
    <text evidence="2 3">Binds 1 Mg(2+) or Mn(2+) ion per subunit (PubMed:23409873). Can use both Mn(2+) and Mg(2+), activity in vitro is 12% higher with Mn(2+) (PubMed:23409873). Banerjee et al. detected activity with Mg(2+) and Zn(2+), but not with Mn(2+) or Ca(2+) (PubMed:16194279).</text>
</comment>
<comment type="activity regulation">
    <text evidence="4">Activity is repressed through acetylation by Rv2170.</text>
</comment>
<comment type="biophysicochemical properties">
    <kinetics>
        <KM evidence="2">10 uM for D,L-isocitrate (in the presence of Mg(2+))</KM>
        <KM evidence="2">22 uM for D,L-isocitrate (in the presence of Zn(2+))</KM>
        <KM evidence="2">125 uM for NADP(+) (in the presence of Mg(2+))</KM>
        <text evidence="3">kcat is 33 sec(-1).</text>
    </kinetics>
    <phDependence>
        <text evidence="2">Optimum pH is 7.5 (PubMed:16194279). Can tolerate a wide pH range retaining about 30% activity in acidic pH 5.5 to about 90% activity in alkaline pH 9.5 (PubMed:16194279).</text>
    </phDependence>
    <temperatureDependence>
        <text evidence="2">Optimum temperature is 40 degrees Celsius (PubMed:16194279). Retains about 40% activity at 60 degrees Celsius (PubMed:16194279).</text>
    </temperatureDependence>
</comment>
<comment type="subunit">
    <text evidence="2 3">Homodimer.</text>
</comment>
<comment type="induction">
    <text evidence="2">Expressed at the protein level, as evidenced by antibodies present in the sera of patients infected with tuberculosis.</text>
</comment>
<comment type="PTM">
    <text evidence="4">Acetylated at Lys-30 and Lys-129 by Rv2170, which decreases the catalytic activity.</text>
</comment>
<comment type="similarity">
    <text evidence="7">Belongs to the isocitrate and isopropylmalate dehydrogenases family.</text>
</comment>
<keyword id="KW-0002">3D-structure</keyword>
<keyword id="KW-0007">Acetylation</keyword>
<keyword id="KW-0329">Glyoxylate bypass</keyword>
<keyword id="KW-0460">Magnesium</keyword>
<keyword id="KW-0464">Manganese</keyword>
<keyword id="KW-0479">Metal-binding</keyword>
<keyword id="KW-0521">NADP</keyword>
<keyword id="KW-0560">Oxidoreductase</keyword>
<keyword id="KW-1185">Reference proteome</keyword>
<keyword id="KW-0816">Tricarboxylic acid cycle</keyword>
<reference key="1">
    <citation type="journal article" date="1998" name="Nature">
        <title>Deciphering the biology of Mycobacterium tuberculosis from the complete genome sequence.</title>
        <authorList>
            <person name="Cole S.T."/>
            <person name="Brosch R."/>
            <person name="Parkhill J."/>
            <person name="Garnier T."/>
            <person name="Churcher C.M."/>
            <person name="Harris D.E."/>
            <person name="Gordon S.V."/>
            <person name="Eiglmeier K."/>
            <person name="Gas S."/>
            <person name="Barry C.E. III"/>
            <person name="Tekaia F."/>
            <person name="Badcock K."/>
            <person name="Basham D."/>
            <person name="Brown D."/>
            <person name="Chillingworth T."/>
            <person name="Connor R."/>
            <person name="Davies R.M."/>
            <person name="Devlin K."/>
            <person name="Feltwell T."/>
            <person name="Gentles S."/>
            <person name="Hamlin N."/>
            <person name="Holroyd S."/>
            <person name="Hornsby T."/>
            <person name="Jagels K."/>
            <person name="Krogh A."/>
            <person name="McLean J."/>
            <person name="Moule S."/>
            <person name="Murphy L.D."/>
            <person name="Oliver S."/>
            <person name="Osborne J."/>
            <person name="Quail M.A."/>
            <person name="Rajandream M.A."/>
            <person name="Rogers J."/>
            <person name="Rutter S."/>
            <person name="Seeger K."/>
            <person name="Skelton S."/>
            <person name="Squares S."/>
            <person name="Squares R."/>
            <person name="Sulston J.E."/>
            <person name="Taylor K."/>
            <person name="Whitehead S."/>
            <person name="Barrell B.G."/>
        </authorList>
    </citation>
    <scope>NUCLEOTIDE SEQUENCE [LARGE SCALE GENOMIC DNA]</scope>
    <source>
        <strain>ATCC 25618 / H37Rv</strain>
    </source>
</reference>
<reference key="2">
    <citation type="journal article" date="2005" name="BMC Biochem.">
        <title>Comparison of Mycobacterium tuberculosis isocitrate dehydrogenases (ICD-1 and ICD-2) reveals differences in coenzyme affinity, oligomeric state, pH tolerance and phylogenetic affiliation.</title>
        <authorList>
            <person name="Banerjee S."/>
            <person name="Nandyala A."/>
            <person name="Podili R."/>
            <person name="Katoch V.M."/>
            <person name="Hasnain S.E."/>
        </authorList>
    </citation>
    <scope>FUNCTION</scope>
    <scope>CATALYTIC ACTIVITY</scope>
    <scope>COFACTOR</scope>
    <scope>BIOPHYSICOCHEMICAL PROPERTIES</scope>
    <scope>SUBUNIT</scope>
    <scope>INDUCTION</scope>
</reference>
<reference key="3">
    <citation type="journal article" date="2011" name="Mol. Cell. Proteomics">
        <title>Proteogenomic analysis of Mycobacterium tuberculosis by high resolution mass spectrometry.</title>
        <authorList>
            <person name="Kelkar D.S."/>
            <person name="Kumar D."/>
            <person name="Kumar P."/>
            <person name="Balakrishnan L."/>
            <person name="Muthusamy B."/>
            <person name="Yadav A.K."/>
            <person name="Shrivastava P."/>
            <person name="Marimuthu A."/>
            <person name="Anand S."/>
            <person name="Sundaram H."/>
            <person name="Kingsbury R."/>
            <person name="Harsha H.C."/>
            <person name="Nair B."/>
            <person name="Prasad T.S."/>
            <person name="Chauhan D.S."/>
            <person name="Katoch K."/>
            <person name="Katoch V.M."/>
            <person name="Kumar P."/>
            <person name="Chaerkady R."/>
            <person name="Ramachandran S."/>
            <person name="Dash D."/>
            <person name="Pandey A."/>
        </authorList>
    </citation>
    <scope>IDENTIFICATION BY MASS SPECTROMETRY [LARGE SCALE ANALYSIS]</scope>
    <source>
        <strain>ATCC 25618 / H37Rv</strain>
    </source>
</reference>
<reference key="4">
    <citation type="journal article" date="2017" name="Sci. Rep.">
        <title>Novel protein acetyltransferase, Rv2170, modulates carbon and energy metabolism in Mycobacterium tuberculosis.</title>
        <authorList>
            <person name="Lee W."/>
            <person name="VanderVen B.C."/>
            <person name="Walker S."/>
            <person name="Russell D.G."/>
        </authorList>
    </citation>
    <scope>FUNCTION</scope>
    <scope>CATALYTIC ACTIVITY</scope>
    <scope>ACTIVITY REGULATION</scope>
    <scope>ACETYLATION AT LYS-30 AND LYS-129</scope>
    <scope>IDENTIFICATION BY MASS SPECTROMETRY</scope>
    <source>
        <strain>H37Rv</strain>
    </source>
</reference>
<reference evidence="8" key="5">
    <citation type="journal article" date="2013" name="Biochemistry">
        <title>Structural, kinetic and chemical mechanism of isocitrate dehydrogenase-1 from Mycobacterium tuberculosis.</title>
        <authorList>
            <person name="Quartararo C.E."/>
            <person name="Hazra S."/>
            <person name="Hadi T."/>
            <person name="Blanchard J.S."/>
        </authorList>
    </citation>
    <scope>X-RAY CRYSTALLOGRAPHY (2.18 ANGSTROMS) IN COMPLEX WITH MN(2+) AND NADPH</scope>
    <scope>FUNCTION</scope>
    <scope>CATALYTIC ACTIVITY</scope>
    <scope>COFACTOR</scope>
    <scope>BIOPHYSICOCHEMICAL PROPERTIES</scope>
    <scope>SUBUNIT</scope>
    <source>
        <strain>H37Rv</strain>
    </source>
</reference>
<name>IDH1_MYCTU</name>